<protein>
    <recommendedName>
        <fullName evidence="1">Methionine--tRNA ligase</fullName>
        <ecNumber evidence="1">6.1.1.10</ecNumber>
    </recommendedName>
    <alternativeName>
        <fullName evidence="1">Methionyl-tRNA synthetase</fullName>
        <shortName evidence="1">MetRS</shortName>
    </alternativeName>
</protein>
<name>SYM_VIBCH</name>
<comment type="function">
    <text evidence="1">Is required not only for elongation of protein synthesis but also for the initiation of all mRNA translation through initiator tRNA(fMet) aminoacylation.</text>
</comment>
<comment type="catalytic activity">
    <reaction evidence="1">
        <text>tRNA(Met) + L-methionine + ATP = L-methionyl-tRNA(Met) + AMP + diphosphate</text>
        <dbReference type="Rhea" id="RHEA:13481"/>
        <dbReference type="Rhea" id="RHEA-COMP:9667"/>
        <dbReference type="Rhea" id="RHEA-COMP:9698"/>
        <dbReference type="ChEBI" id="CHEBI:30616"/>
        <dbReference type="ChEBI" id="CHEBI:33019"/>
        <dbReference type="ChEBI" id="CHEBI:57844"/>
        <dbReference type="ChEBI" id="CHEBI:78442"/>
        <dbReference type="ChEBI" id="CHEBI:78530"/>
        <dbReference type="ChEBI" id="CHEBI:456215"/>
        <dbReference type="EC" id="6.1.1.10"/>
    </reaction>
</comment>
<comment type="cofactor">
    <cofactor evidence="1">
        <name>Zn(2+)</name>
        <dbReference type="ChEBI" id="CHEBI:29105"/>
    </cofactor>
    <text evidence="1">Binds 1 zinc ion per subunit.</text>
</comment>
<comment type="subunit">
    <text evidence="1">Homodimer.</text>
</comment>
<comment type="subcellular location">
    <subcellularLocation>
        <location evidence="1">Cytoplasm</location>
    </subcellularLocation>
</comment>
<comment type="similarity">
    <text evidence="1">Belongs to the class-I aminoacyl-tRNA synthetase family. MetG type 1 subfamily.</text>
</comment>
<comment type="sequence caution" evidence="2">
    <conflict type="erroneous initiation">
        <sequence resource="EMBL-CDS" id="AAF94195"/>
    </conflict>
</comment>
<dbReference type="EC" id="6.1.1.10" evidence="1"/>
<dbReference type="EMBL" id="AE003852">
    <property type="protein sequence ID" value="AAF94195.1"/>
    <property type="status" value="ALT_INIT"/>
    <property type="molecule type" value="Genomic_DNA"/>
</dbReference>
<dbReference type="PIR" id="D82249">
    <property type="entry name" value="D82249"/>
</dbReference>
<dbReference type="RefSeq" id="NP_230681.2">
    <property type="nucleotide sequence ID" value="NC_002505.1"/>
</dbReference>
<dbReference type="RefSeq" id="WP_001262543.1">
    <property type="nucleotide sequence ID" value="NZ_LT906614.1"/>
</dbReference>
<dbReference type="SMR" id="Q9KT69"/>
<dbReference type="STRING" id="243277.VC_1036"/>
<dbReference type="DNASU" id="2614306"/>
<dbReference type="EnsemblBacteria" id="AAF94195">
    <property type="protein sequence ID" value="AAF94195"/>
    <property type="gene ID" value="VC_1036"/>
</dbReference>
<dbReference type="GeneID" id="89514862"/>
<dbReference type="KEGG" id="vch:VC_1036"/>
<dbReference type="PATRIC" id="fig|243277.26.peg.988"/>
<dbReference type="eggNOG" id="COG0073">
    <property type="taxonomic scope" value="Bacteria"/>
</dbReference>
<dbReference type="eggNOG" id="COG0143">
    <property type="taxonomic scope" value="Bacteria"/>
</dbReference>
<dbReference type="HOGENOM" id="CLU_009710_7_0_6"/>
<dbReference type="Proteomes" id="UP000000584">
    <property type="component" value="Chromosome 1"/>
</dbReference>
<dbReference type="GO" id="GO:0005829">
    <property type="term" value="C:cytosol"/>
    <property type="evidence" value="ECO:0000318"/>
    <property type="project" value="GO_Central"/>
</dbReference>
<dbReference type="GO" id="GO:0005524">
    <property type="term" value="F:ATP binding"/>
    <property type="evidence" value="ECO:0007669"/>
    <property type="project" value="UniProtKB-UniRule"/>
</dbReference>
<dbReference type="GO" id="GO:0046872">
    <property type="term" value="F:metal ion binding"/>
    <property type="evidence" value="ECO:0007669"/>
    <property type="project" value="UniProtKB-KW"/>
</dbReference>
<dbReference type="GO" id="GO:0004825">
    <property type="term" value="F:methionine-tRNA ligase activity"/>
    <property type="evidence" value="ECO:0000318"/>
    <property type="project" value="GO_Central"/>
</dbReference>
<dbReference type="GO" id="GO:0000049">
    <property type="term" value="F:tRNA binding"/>
    <property type="evidence" value="ECO:0007669"/>
    <property type="project" value="UniProtKB-KW"/>
</dbReference>
<dbReference type="GO" id="GO:0006431">
    <property type="term" value="P:methionyl-tRNA aminoacylation"/>
    <property type="evidence" value="ECO:0000318"/>
    <property type="project" value="GO_Central"/>
</dbReference>
<dbReference type="CDD" id="cd07957">
    <property type="entry name" value="Anticodon_Ia_Met"/>
    <property type="match status" value="1"/>
</dbReference>
<dbReference type="CDD" id="cd00814">
    <property type="entry name" value="MetRS_core"/>
    <property type="match status" value="1"/>
</dbReference>
<dbReference type="CDD" id="cd02800">
    <property type="entry name" value="tRNA_bind_EcMetRS_like"/>
    <property type="match status" value="1"/>
</dbReference>
<dbReference type="FunFam" id="1.10.730.10:FF:000005">
    <property type="entry name" value="Methionine--tRNA ligase"/>
    <property type="match status" value="1"/>
</dbReference>
<dbReference type="FunFam" id="2.20.28.20:FF:000001">
    <property type="entry name" value="Methionine--tRNA ligase"/>
    <property type="match status" value="1"/>
</dbReference>
<dbReference type="FunFam" id="2.40.50.140:FF:000042">
    <property type="entry name" value="Methionine--tRNA ligase"/>
    <property type="match status" value="1"/>
</dbReference>
<dbReference type="Gene3D" id="3.40.50.620">
    <property type="entry name" value="HUPs"/>
    <property type="match status" value="1"/>
</dbReference>
<dbReference type="Gene3D" id="1.10.730.10">
    <property type="entry name" value="Isoleucyl-tRNA Synthetase, Domain 1"/>
    <property type="match status" value="1"/>
</dbReference>
<dbReference type="Gene3D" id="2.20.28.20">
    <property type="entry name" value="Methionyl-tRNA synthetase, Zn-domain"/>
    <property type="match status" value="1"/>
</dbReference>
<dbReference type="Gene3D" id="2.40.50.140">
    <property type="entry name" value="Nucleic acid-binding proteins"/>
    <property type="match status" value="1"/>
</dbReference>
<dbReference type="HAMAP" id="MF_00098">
    <property type="entry name" value="Met_tRNA_synth_type1"/>
    <property type="match status" value="1"/>
</dbReference>
<dbReference type="InterPro" id="IPR001412">
    <property type="entry name" value="aa-tRNA-synth_I_CS"/>
</dbReference>
<dbReference type="InterPro" id="IPR041872">
    <property type="entry name" value="Anticodon_Met"/>
</dbReference>
<dbReference type="InterPro" id="IPR004495">
    <property type="entry name" value="Met-tRNA-synth_bsu_C"/>
</dbReference>
<dbReference type="InterPro" id="IPR023458">
    <property type="entry name" value="Met-tRNA_ligase_1"/>
</dbReference>
<dbReference type="InterPro" id="IPR014758">
    <property type="entry name" value="Met-tRNA_synth"/>
</dbReference>
<dbReference type="InterPro" id="IPR015413">
    <property type="entry name" value="Methionyl/Leucyl_tRNA_Synth"/>
</dbReference>
<dbReference type="InterPro" id="IPR033911">
    <property type="entry name" value="MetRS_core"/>
</dbReference>
<dbReference type="InterPro" id="IPR029038">
    <property type="entry name" value="MetRS_Zn"/>
</dbReference>
<dbReference type="InterPro" id="IPR012340">
    <property type="entry name" value="NA-bd_OB-fold"/>
</dbReference>
<dbReference type="InterPro" id="IPR014729">
    <property type="entry name" value="Rossmann-like_a/b/a_fold"/>
</dbReference>
<dbReference type="InterPro" id="IPR002547">
    <property type="entry name" value="tRNA-bd_dom"/>
</dbReference>
<dbReference type="InterPro" id="IPR009080">
    <property type="entry name" value="tRNAsynth_Ia_anticodon-bd"/>
</dbReference>
<dbReference type="NCBIfam" id="TIGR00398">
    <property type="entry name" value="metG"/>
    <property type="match status" value="1"/>
</dbReference>
<dbReference type="NCBIfam" id="TIGR00399">
    <property type="entry name" value="metG_C_term"/>
    <property type="match status" value="1"/>
</dbReference>
<dbReference type="NCBIfam" id="NF001100">
    <property type="entry name" value="PRK00133.1"/>
    <property type="match status" value="1"/>
</dbReference>
<dbReference type="PANTHER" id="PTHR45765">
    <property type="entry name" value="METHIONINE--TRNA LIGASE"/>
    <property type="match status" value="1"/>
</dbReference>
<dbReference type="PANTHER" id="PTHR45765:SF1">
    <property type="entry name" value="METHIONINE--TRNA LIGASE, CYTOPLASMIC"/>
    <property type="match status" value="1"/>
</dbReference>
<dbReference type="Pfam" id="PF19303">
    <property type="entry name" value="Anticodon_3"/>
    <property type="match status" value="1"/>
</dbReference>
<dbReference type="Pfam" id="PF09334">
    <property type="entry name" value="tRNA-synt_1g"/>
    <property type="match status" value="1"/>
</dbReference>
<dbReference type="Pfam" id="PF01588">
    <property type="entry name" value="tRNA_bind"/>
    <property type="match status" value="1"/>
</dbReference>
<dbReference type="PRINTS" id="PR01041">
    <property type="entry name" value="TRNASYNTHMET"/>
</dbReference>
<dbReference type="SUPFAM" id="SSF47323">
    <property type="entry name" value="Anticodon-binding domain of a subclass of class I aminoacyl-tRNA synthetases"/>
    <property type="match status" value="1"/>
</dbReference>
<dbReference type="SUPFAM" id="SSF57770">
    <property type="entry name" value="Methionyl-tRNA synthetase (MetRS), Zn-domain"/>
    <property type="match status" value="1"/>
</dbReference>
<dbReference type="SUPFAM" id="SSF50249">
    <property type="entry name" value="Nucleic acid-binding proteins"/>
    <property type="match status" value="1"/>
</dbReference>
<dbReference type="SUPFAM" id="SSF52374">
    <property type="entry name" value="Nucleotidylyl transferase"/>
    <property type="match status" value="1"/>
</dbReference>
<dbReference type="PROSITE" id="PS00178">
    <property type="entry name" value="AA_TRNA_LIGASE_I"/>
    <property type="match status" value="1"/>
</dbReference>
<dbReference type="PROSITE" id="PS50886">
    <property type="entry name" value="TRBD"/>
    <property type="match status" value="1"/>
</dbReference>
<accession>Q9KT69</accession>
<organism>
    <name type="scientific">Vibrio cholerae serotype O1 (strain ATCC 39315 / El Tor Inaba N16961)</name>
    <dbReference type="NCBI Taxonomy" id="243277"/>
    <lineage>
        <taxon>Bacteria</taxon>
        <taxon>Pseudomonadati</taxon>
        <taxon>Pseudomonadota</taxon>
        <taxon>Gammaproteobacteria</taxon>
        <taxon>Vibrionales</taxon>
        <taxon>Vibrionaceae</taxon>
        <taxon>Vibrio</taxon>
    </lineage>
</organism>
<gene>
    <name evidence="1" type="primary">metG</name>
    <name type="ordered locus">VC_1036</name>
</gene>
<proteinExistence type="inferred from homology"/>
<sequence>MANDPRKLLVTCALPYANGSIHLGHMLEHIQADIWVRYQRLRGNTVNFICADDAHGTPIMLKAQQMGMTPEAMIEMVSEEHQRDFAGFDISFDNYHSTHSDENRELASHIYLQLKKNGFISSRTISQLFDPEKEMFLPDRFVKGTCPKCKSEDQYGDNCDACGETYSPTELINPKSAVSGATPVMKDSEHFFFDLPQFESMLKEWTRSGSLQSETANKMQEWFEGGLQQWDISRDAPYFGFEIPGEKDKFFYVWLDAPIGYMGSFKNLCDKRGDLDFNEYWNKDSKTELYHFIGKDIVYFHSLFWPAMLDGSGFRKPTNVFVHGYVTVNGAKMSKSKGTFVKASTYLNHLDPECLRYYYAAKLNNRIDDLDLNLEDFTQRVNADVVNKIVNLASRNAGFITKRFDGKLSAHFAEPELYAEFAGAADRIAELFEAREFGRAIREITALADKANQYVDEKAPWVVAKQEGQDQALQDICTVGINLFRVLMTYLKPVMPALAERTEAFLNQELTWEGVATPLTDHAVTPFKALFNRIDPKQVEAMIEASKAEAAAEKAAADAAKPKSAETELSKDPLAAEIEFDDFAKVDLRIAKILSCEAVEKSDKLLKFELDIGGETRQVFSGIKSAYQPEDLIGKYTVVVANLKPRKMKFGMSEGMILAAGPGGSDLWLLEPHQGAQAGMRVM</sequence>
<keyword id="KW-0030">Aminoacyl-tRNA synthetase</keyword>
<keyword id="KW-0067">ATP-binding</keyword>
<keyword id="KW-0963">Cytoplasm</keyword>
<keyword id="KW-0436">Ligase</keyword>
<keyword id="KW-0479">Metal-binding</keyword>
<keyword id="KW-0547">Nucleotide-binding</keyword>
<keyword id="KW-0648">Protein biosynthesis</keyword>
<keyword id="KW-1185">Reference proteome</keyword>
<keyword id="KW-0694">RNA-binding</keyword>
<keyword id="KW-0820">tRNA-binding</keyword>
<keyword id="KW-0862">Zinc</keyword>
<feature type="chain" id="PRO_0000139169" description="Methionine--tRNA ligase">
    <location>
        <begin position="1"/>
        <end position="683"/>
    </location>
</feature>
<feature type="domain" description="tRNA-binding" evidence="1">
    <location>
        <begin position="582"/>
        <end position="683"/>
    </location>
</feature>
<feature type="short sequence motif" description="'HIGH' region">
    <location>
        <begin position="15"/>
        <end position="25"/>
    </location>
</feature>
<feature type="short sequence motif" description="'KMSKS' region">
    <location>
        <begin position="332"/>
        <end position="336"/>
    </location>
</feature>
<feature type="binding site" evidence="1">
    <location>
        <position position="146"/>
    </location>
    <ligand>
        <name>Zn(2+)</name>
        <dbReference type="ChEBI" id="CHEBI:29105"/>
    </ligand>
</feature>
<feature type="binding site" evidence="1">
    <location>
        <position position="149"/>
    </location>
    <ligand>
        <name>Zn(2+)</name>
        <dbReference type="ChEBI" id="CHEBI:29105"/>
    </ligand>
</feature>
<feature type="binding site" evidence="1">
    <location>
        <position position="159"/>
    </location>
    <ligand>
        <name>Zn(2+)</name>
        <dbReference type="ChEBI" id="CHEBI:29105"/>
    </ligand>
</feature>
<feature type="binding site" evidence="1">
    <location>
        <position position="162"/>
    </location>
    <ligand>
        <name>Zn(2+)</name>
        <dbReference type="ChEBI" id="CHEBI:29105"/>
    </ligand>
</feature>
<feature type="binding site" evidence="1">
    <location>
        <position position="335"/>
    </location>
    <ligand>
        <name>ATP</name>
        <dbReference type="ChEBI" id="CHEBI:30616"/>
    </ligand>
</feature>
<reference key="1">
    <citation type="journal article" date="2000" name="Nature">
        <title>DNA sequence of both chromosomes of the cholera pathogen Vibrio cholerae.</title>
        <authorList>
            <person name="Heidelberg J.F."/>
            <person name="Eisen J.A."/>
            <person name="Nelson W.C."/>
            <person name="Clayton R.A."/>
            <person name="Gwinn M.L."/>
            <person name="Dodson R.J."/>
            <person name="Haft D.H."/>
            <person name="Hickey E.K."/>
            <person name="Peterson J.D."/>
            <person name="Umayam L.A."/>
            <person name="Gill S.R."/>
            <person name="Nelson K.E."/>
            <person name="Read T.D."/>
            <person name="Tettelin H."/>
            <person name="Richardson D.L."/>
            <person name="Ermolaeva M.D."/>
            <person name="Vamathevan J.J."/>
            <person name="Bass S."/>
            <person name="Qin H."/>
            <person name="Dragoi I."/>
            <person name="Sellers P."/>
            <person name="McDonald L.A."/>
            <person name="Utterback T.R."/>
            <person name="Fleischmann R.D."/>
            <person name="Nierman W.C."/>
            <person name="White O."/>
            <person name="Salzberg S.L."/>
            <person name="Smith H.O."/>
            <person name="Colwell R.R."/>
            <person name="Mekalanos J.J."/>
            <person name="Venter J.C."/>
            <person name="Fraser C.M."/>
        </authorList>
    </citation>
    <scope>NUCLEOTIDE SEQUENCE [LARGE SCALE GENOMIC DNA]</scope>
    <source>
        <strain>ATCC 39315 / El Tor Inaba N16961</strain>
    </source>
</reference>
<evidence type="ECO:0000255" key="1">
    <source>
        <dbReference type="HAMAP-Rule" id="MF_00098"/>
    </source>
</evidence>
<evidence type="ECO:0000305" key="2"/>